<comment type="similarity">
    <text evidence="2">Belongs to the eukaryotic ribosomal protein eS8 family.</text>
</comment>
<protein>
    <recommendedName>
        <fullName evidence="2">Small ribosomal subunit protein eS8</fullName>
    </recommendedName>
    <alternativeName>
        <fullName>40S ribosomal protein S8</fullName>
    </alternativeName>
</protein>
<name>RS8_ORYSJ</name>
<keyword id="KW-1185">Reference proteome</keyword>
<keyword id="KW-0687">Ribonucleoprotein</keyword>
<keyword id="KW-0689">Ribosomal protein</keyword>
<feature type="chain" id="PRO_0000122254" description="Small ribosomal subunit protein eS8">
    <location>
        <begin position="1"/>
        <end position="220"/>
    </location>
</feature>
<feature type="region of interest" description="Disordered" evidence="1">
    <location>
        <begin position="1"/>
        <end position="41"/>
    </location>
</feature>
<feature type="region of interest" description="Disordered" evidence="1">
    <location>
        <begin position="131"/>
        <end position="151"/>
    </location>
</feature>
<feature type="compositionally biased region" description="Basic residues" evidence="1">
    <location>
        <begin position="8"/>
        <end position="26"/>
    </location>
</feature>
<feature type="sequence conflict" description="In Ref. 1; BAA07207." evidence="2" ref="1">
    <original>APAAKKDAE</original>
    <variation>EPPHPRGCC</variation>
    <location>
        <begin position="128"/>
        <end position="136"/>
    </location>
</feature>
<accession>P49199</accession>
<accession>Q0E158</accession>
<accession>Q6K771</accession>
<reference key="1">
    <citation type="journal article" date="1995" name="Plant Physiol.">
        <title>Nucleotide sequence of a rice cDNA encoding a homolog of the eukaryotic ribosomal protein S8.</title>
        <authorList>
            <person name="Nakamura I."/>
            <person name="Kameya N."/>
            <person name="Aoki T."/>
            <person name="Tada T."/>
            <person name="Norita E."/>
            <person name="Kanzaki H."/>
            <person name="Uchimiya H."/>
        </authorList>
    </citation>
    <scope>NUCLEOTIDE SEQUENCE [MRNA]</scope>
    <source>
        <tissue>Callus</tissue>
    </source>
</reference>
<reference key="2">
    <citation type="journal article" date="2005" name="Nature">
        <title>The map-based sequence of the rice genome.</title>
        <authorList>
            <consortium name="International rice genome sequencing project (IRGSP)"/>
        </authorList>
    </citation>
    <scope>NUCLEOTIDE SEQUENCE [LARGE SCALE GENOMIC DNA]</scope>
    <source>
        <strain>cv. Nipponbare</strain>
    </source>
</reference>
<reference key="3">
    <citation type="journal article" date="2008" name="Nucleic Acids Res.">
        <title>The rice annotation project database (RAP-DB): 2008 update.</title>
        <authorList>
            <consortium name="The rice annotation project (RAP)"/>
        </authorList>
    </citation>
    <scope>GENOME REANNOTATION</scope>
    <source>
        <strain>cv. Nipponbare</strain>
    </source>
</reference>
<reference key="4">
    <citation type="journal article" date="2013" name="Rice">
        <title>Improvement of the Oryza sativa Nipponbare reference genome using next generation sequence and optical map data.</title>
        <authorList>
            <person name="Kawahara Y."/>
            <person name="de la Bastide M."/>
            <person name="Hamilton J.P."/>
            <person name="Kanamori H."/>
            <person name="McCombie W.R."/>
            <person name="Ouyang S."/>
            <person name="Schwartz D.C."/>
            <person name="Tanaka T."/>
            <person name="Wu J."/>
            <person name="Zhou S."/>
            <person name="Childs K.L."/>
            <person name="Davidson R.M."/>
            <person name="Lin H."/>
            <person name="Quesada-Ocampo L."/>
            <person name="Vaillancourt B."/>
            <person name="Sakai H."/>
            <person name="Lee S.S."/>
            <person name="Kim J."/>
            <person name="Numa H."/>
            <person name="Itoh T."/>
            <person name="Buell C.R."/>
            <person name="Matsumoto T."/>
        </authorList>
    </citation>
    <scope>GENOME REANNOTATION</scope>
    <source>
        <strain>cv. Nipponbare</strain>
    </source>
</reference>
<reference key="5">
    <citation type="journal article" date="2005" name="PLoS Biol.">
        <title>The genomes of Oryza sativa: a history of duplications.</title>
        <authorList>
            <person name="Yu J."/>
            <person name="Wang J."/>
            <person name="Lin W."/>
            <person name="Li S."/>
            <person name="Li H."/>
            <person name="Zhou J."/>
            <person name="Ni P."/>
            <person name="Dong W."/>
            <person name="Hu S."/>
            <person name="Zeng C."/>
            <person name="Zhang J."/>
            <person name="Zhang Y."/>
            <person name="Li R."/>
            <person name="Xu Z."/>
            <person name="Li S."/>
            <person name="Li X."/>
            <person name="Zheng H."/>
            <person name="Cong L."/>
            <person name="Lin L."/>
            <person name="Yin J."/>
            <person name="Geng J."/>
            <person name="Li G."/>
            <person name="Shi J."/>
            <person name="Liu J."/>
            <person name="Lv H."/>
            <person name="Li J."/>
            <person name="Wang J."/>
            <person name="Deng Y."/>
            <person name="Ran L."/>
            <person name="Shi X."/>
            <person name="Wang X."/>
            <person name="Wu Q."/>
            <person name="Li C."/>
            <person name="Ren X."/>
            <person name="Wang J."/>
            <person name="Wang X."/>
            <person name="Li D."/>
            <person name="Liu D."/>
            <person name="Zhang X."/>
            <person name="Ji Z."/>
            <person name="Zhao W."/>
            <person name="Sun Y."/>
            <person name="Zhang Z."/>
            <person name="Bao J."/>
            <person name="Han Y."/>
            <person name="Dong L."/>
            <person name="Ji J."/>
            <person name="Chen P."/>
            <person name="Wu S."/>
            <person name="Liu J."/>
            <person name="Xiao Y."/>
            <person name="Bu D."/>
            <person name="Tan J."/>
            <person name="Yang L."/>
            <person name="Ye C."/>
            <person name="Zhang J."/>
            <person name="Xu J."/>
            <person name="Zhou Y."/>
            <person name="Yu Y."/>
            <person name="Zhang B."/>
            <person name="Zhuang S."/>
            <person name="Wei H."/>
            <person name="Liu B."/>
            <person name="Lei M."/>
            <person name="Yu H."/>
            <person name="Li Y."/>
            <person name="Xu H."/>
            <person name="Wei S."/>
            <person name="He X."/>
            <person name="Fang L."/>
            <person name="Zhang Z."/>
            <person name="Zhang Y."/>
            <person name="Huang X."/>
            <person name="Su Z."/>
            <person name="Tong W."/>
            <person name="Li J."/>
            <person name="Tong Z."/>
            <person name="Li S."/>
            <person name="Ye J."/>
            <person name="Wang L."/>
            <person name="Fang L."/>
            <person name="Lei T."/>
            <person name="Chen C.-S."/>
            <person name="Chen H.-C."/>
            <person name="Xu Z."/>
            <person name="Li H."/>
            <person name="Huang H."/>
            <person name="Zhang F."/>
            <person name="Xu H."/>
            <person name="Li N."/>
            <person name="Zhao C."/>
            <person name="Li S."/>
            <person name="Dong L."/>
            <person name="Huang Y."/>
            <person name="Li L."/>
            <person name="Xi Y."/>
            <person name="Qi Q."/>
            <person name="Li W."/>
            <person name="Zhang B."/>
            <person name="Hu W."/>
            <person name="Zhang Y."/>
            <person name="Tian X."/>
            <person name="Jiao Y."/>
            <person name="Liang X."/>
            <person name="Jin J."/>
            <person name="Gao L."/>
            <person name="Zheng W."/>
            <person name="Hao B."/>
            <person name="Liu S.-M."/>
            <person name="Wang W."/>
            <person name="Yuan L."/>
            <person name="Cao M."/>
            <person name="McDermott J."/>
            <person name="Samudrala R."/>
            <person name="Wang J."/>
            <person name="Wong G.K.-S."/>
            <person name="Yang H."/>
        </authorList>
    </citation>
    <scope>NUCLEOTIDE SEQUENCE [LARGE SCALE GENOMIC DNA]</scope>
    <source>
        <strain>cv. Nipponbare</strain>
    </source>
</reference>
<reference key="6">
    <citation type="journal article" date="2003" name="Science">
        <title>Collection, mapping, and annotation of over 28,000 cDNA clones from japonica rice.</title>
        <authorList>
            <consortium name="The rice full-length cDNA consortium"/>
        </authorList>
    </citation>
    <scope>NUCLEOTIDE SEQUENCE [LARGE SCALE MRNA]</scope>
    <source>
        <strain>cv. Nipponbare</strain>
    </source>
</reference>
<gene>
    <name type="primary">RPS8</name>
    <name type="ordered locus">Os02g0489400</name>
    <name type="ordered locus">LOC_Os02g28810</name>
    <name evidence="3" type="ORF">OsJ_06781</name>
    <name type="ORF">OSJNBa0048K16.2</name>
    <name type="ORF">P0483C08.42</name>
</gene>
<evidence type="ECO:0000256" key="1">
    <source>
        <dbReference type="SAM" id="MobiDB-lite"/>
    </source>
</evidence>
<evidence type="ECO:0000305" key="2"/>
<evidence type="ECO:0000312" key="3">
    <source>
        <dbReference type="EMBL" id="EEE57012.1"/>
    </source>
</evidence>
<proteinExistence type="evidence at transcript level"/>
<sequence>MGISRDSMHKRRATGGKQKAWRKKRKYELGRQPANTKLSSNKTVRRVRVRGGNVKWRALRLDTGNYSWGSEAVTRKTRILDVVYNASNNELVRTQTLVKSAIVQVDAAPFKQWYLTHYGVDIGRKKKAPAAKKDAEGQDAEATTEEAKKSNHVVRKLEKRQQGRTLDAHIEEQFGSGRLLACISSRPGQCGRADGYILEGKELEFYMKKLQRKKGKGASA</sequence>
<dbReference type="EMBL" id="D38010">
    <property type="protein sequence ID" value="BAA07207.1"/>
    <property type="molecule type" value="mRNA"/>
</dbReference>
<dbReference type="EMBL" id="AP004837">
    <property type="protein sequence ID" value="BAD21871.1"/>
    <property type="molecule type" value="Genomic_DNA"/>
</dbReference>
<dbReference type="EMBL" id="AP004864">
    <property type="protein sequence ID" value="BAD21876.1"/>
    <property type="molecule type" value="Genomic_DNA"/>
</dbReference>
<dbReference type="EMBL" id="AP008208">
    <property type="protein sequence ID" value="BAF08780.1"/>
    <property type="molecule type" value="Genomic_DNA"/>
</dbReference>
<dbReference type="EMBL" id="AP014958">
    <property type="protein sequence ID" value="BAS78730.1"/>
    <property type="molecule type" value="Genomic_DNA"/>
</dbReference>
<dbReference type="EMBL" id="CM000139">
    <property type="protein sequence ID" value="EEE57012.1"/>
    <property type="molecule type" value="Genomic_DNA"/>
</dbReference>
<dbReference type="EMBL" id="AK102757">
    <property type="protein sequence ID" value="BAG95703.1"/>
    <property type="molecule type" value="mRNA"/>
</dbReference>
<dbReference type="PIR" id="T04082">
    <property type="entry name" value="T04082"/>
</dbReference>
<dbReference type="RefSeq" id="XP_015627504.1">
    <property type="nucleotide sequence ID" value="XM_015772018.1"/>
</dbReference>
<dbReference type="SMR" id="P49199"/>
<dbReference type="FunCoup" id="P49199">
    <property type="interactions" value="1998"/>
</dbReference>
<dbReference type="STRING" id="39947.P49199"/>
<dbReference type="PaxDb" id="39947-P49199"/>
<dbReference type="EnsemblPlants" id="Os02t0489400-01">
    <property type="protein sequence ID" value="Os02t0489400-01"/>
    <property type="gene ID" value="Os02g0489400"/>
</dbReference>
<dbReference type="Gramene" id="Os02t0489400-01">
    <property type="protein sequence ID" value="Os02t0489400-01"/>
    <property type="gene ID" value="Os02g0489400"/>
</dbReference>
<dbReference type="KEGG" id="dosa:Os02g0489400"/>
<dbReference type="eggNOG" id="KOG3283">
    <property type="taxonomic scope" value="Eukaryota"/>
</dbReference>
<dbReference type="HOGENOM" id="CLU_080597_1_1_1"/>
<dbReference type="InParanoid" id="P49199"/>
<dbReference type="OMA" id="QRPHYRK"/>
<dbReference type="OrthoDB" id="1703270at2759"/>
<dbReference type="Proteomes" id="UP000000763">
    <property type="component" value="Chromosome 2"/>
</dbReference>
<dbReference type="Proteomes" id="UP000007752">
    <property type="component" value="Chromosome 2"/>
</dbReference>
<dbReference type="Proteomes" id="UP000059680">
    <property type="component" value="Chromosome 2"/>
</dbReference>
<dbReference type="GO" id="GO:0022627">
    <property type="term" value="C:cytosolic small ribosomal subunit"/>
    <property type="evidence" value="ECO:0000318"/>
    <property type="project" value="GO_Central"/>
</dbReference>
<dbReference type="GO" id="GO:0003735">
    <property type="term" value="F:structural constituent of ribosome"/>
    <property type="evidence" value="ECO:0000318"/>
    <property type="project" value="GO_Central"/>
</dbReference>
<dbReference type="GO" id="GO:0000462">
    <property type="term" value="P:maturation of SSU-rRNA from tricistronic rRNA transcript (SSU-rRNA, 5.8S rRNA, LSU-rRNA)"/>
    <property type="evidence" value="ECO:0000318"/>
    <property type="project" value="GO_Central"/>
</dbReference>
<dbReference type="GO" id="GO:0006412">
    <property type="term" value="P:translation"/>
    <property type="evidence" value="ECO:0007669"/>
    <property type="project" value="InterPro"/>
</dbReference>
<dbReference type="CDD" id="cd11380">
    <property type="entry name" value="Ribosomal_S8e_like"/>
    <property type="match status" value="1"/>
</dbReference>
<dbReference type="FunFam" id="1.10.168.20:FF:000002">
    <property type="entry name" value="40S ribosomal protein S8"/>
    <property type="match status" value="1"/>
</dbReference>
<dbReference type="FunFam" id="3.10.290.70:FF:000002">
    <property type="entry name" value="40S ribosomal protein S8"/>
    <property type="match status" value="1"/>
</dbReference>
<dbReference type="FunFam" id="3.10.290.70:FF:000003">
    <property type="entry name" value="40S ribosomal protein S8"/>
    <property type="match status" value="1"/>
</dbReference>
<dbReference type="Gene3D" id="3.10.290.70">
    <property type="match status" value="1"/>
</dbReference>
<dbReference type="Gene3D" id="1.10.168.20">
    <property type="entry name" value="Ribosomal protein S8e, subdomain"/>
    <property type="match status" value="1"/>
</dbReference>
<dbReference type="InterPro" id="IPR001047">
    <property type="entry name" value="Ribosomal_eS8"/>
</dbReference>
<dbReference type="InterPro" id="IPR018283">
    <property type="entry name" value="Ribosomal_eS8_CS"/>
</dbReference>
<dbReference type="InterPro" id="IPR042563">
    <property type="entry name" value="Ribosomal_protein_eS8_euk"/>
</dbReference>
<dbReference type="InterPro" id="IPR022309">
    <property type="entry name" value="Ribosomal_Se8/biogenesis_NSA2"/>
</dbReference>
<dbReference type="NCBIfam" id="TIGR00307">
    <property type="entry name" value="eS8"/>
    <property type="match status" value="1"/>
</dbReference>
<dbReference type="PANTHER" id="PTHR10394">
    <property type="entry name" value="40S RIBOSOMAL PROTEIN S8"/>
    <property type="match status" value="1"/>
</dbReference>
<dbReference type="Pfam" id="PF01201">
    <property type="entry name" value="Ribosomal_S8e"/>
    <property type="match status" value="1"/>
</dbReference>
<dbReference type="PROSITE" id="PS01193">
    <property type="entry name" value="RIBOSOMAL_S8E"/>
    <property type="match status" value="1"/>
</dbReference>
<organism>
    <name type="scientific">Oryza sativa subsp. japonica</name>
    <name type="common">Rice</name>
    <dbReference type="NCBI Taxonomy" id="39947"/>
    <lineage>
        <taxon>Eukaryota</taxon>
        <taxon>Viridiplantae</taxon>
        <taxon>Streptophyta</taxon>
        <taxon>Embryophyta</taxon>
        <taxon>Tracheophyta</taxon>
        <taxon>Spermatophyta</taxon>
        <taxon>Magnoliopsida</taxon>
        <taxon>Liliopsida</taxon>
        <taxon>Poales</taxon>
        <taxon>Poaceae</taxon>
        <taxon>BOP clade</taxon>
        <taxon>Oryzoideae</taxon>
        <taxon>Oryzeae</taxon>
        <taxon>Oryzinae</taxon>
        <taxon>Oryza</taxon>
        <taxon>Oryza sativa</taxon>
    </lineage>
</organism>